<proteinExistence type="inferred from homology"/>
<comment type="function">
    <text evidence="1">Channel that permits osmotically driven movement of water in both directions. It is involved in the osmoregulation and in the maintenance of cell turgor during volume expansion in rapidly growing cells. It mediates rapid entry or exit of water in response to abrupt changes in osmolarity.</text>
</comment>
<comment type="catalytic activity">
    <reaction evidence="1">
        <text>H2O(in) = H2O(out)</text>
        <dbReference type="Rhea" id="RHEA:29667"/>
        <dbReference type="ChEBI" id="CHEBI:15377"/>
    </reaction>
    <physiologicalReaction direction="left-to-right" evidence="1">
        <dbReference type="Rhea" id="RHEA:29668"/>
    </physiologicalReaction>
    <physiologicalReaction direction="right-to-left" evidence="1">
        <dbReference type="Rhea" id="RHEA:29669"/>
    </physiologicalReaction>
</comment>
<comment type="subunit">
    <text evidence="1">Homotetramer.</text>
</comment>
<comment type="subcellular location">
    <subcellularLocation>
        <location evidence="1">Cell inner membrane</location>
        <topology evidence="1">Multi-pass membrane protein</topology>
    </subcellularLocation>
</comment>
<comment type="domain">
    <text evidence="1">Aquaporins contain two tandem repeats each containing three membrane-spanning domains and a pore-forming loop with the signature motif Asn-Pro-Ala (NPA).</text>
</comment>
<comment type="similarity">
    <text evidence="1 2">Belongs to the MIP/aquaporin (TC 1.A.8) family.</text>
</comment>
<keyword id="KW-0997">Cell inner membrane</keyword>
<keyword id="KW-1003">Cell membrane</keyword>
<keyword id="KW-0472">Membrane</keyword>
<keyword id="KW-0677">Repeat</keyword>
<keyword id="KW-0812">Transmembrane</keyword>
<keyword id="KW-1133">Transmembrane helix</keyword>
<keyword id="KW-0813">Transport</keyword>
<organism>
    <name type="scientific">Brucella suis biovar 1 (strain 1330)</name>
    <dbReference type="NCBI Taxonomy" id="204722"/>
    <lineage>
        <taxon>Bacteria</taxon>
        <taxon>Pseudomonadati</taxon>
        <taxon>Pseudomonadota</taxon>
        <taxon>Alphaproteobacteria</taxon>
        <taxon>Hyphomicrobiales</taxon>
        <taxon>Brucellaceae</taxon>
        <taxon>Brucella/Ochrobactrum group</taxon>
        <taxon>Brucella</taxon>
    </lineage>
</organism>
<feature type="chain" id="PRO_0000063986" description="Aquaporin Z">
    <location>
        <begin position="1"/>
        <end position="228"/>
    </location>
</feature>
<feature type="transmembrane region" description="Helical" evidence="1">
    <location>
        <begin position="1"/>
        <end position="21"/>
    </location>
</feature>
<feature type="transmembrane region" description="Helical" evidence="1">
    <location>
        <begin position="46"/>
        <end position="66"/>
    </location>
</feature>
<feature type="transmembrane region" description="Helical" evidence="1">
    <location>
        <begin position="82"/>
        <end position="102"/>
    </location>
</feature>
<feature type="transmembrane region" description="Helical" evidence="1">
    <location>
        <begin position="129"/>
        <end position="149"/>
    </location>
</feature>
<feature type="transmembrane region" description="Helical" evidence="1">
    <location>
        <begin position="154"/>
        <end position="174"/>
    </location>
</feature>
<feature type="transmembrane region" description="Helical" evidence="1">
    <location>
        <begin position="205"/>
        <end position="225"/>
    </location>
</feature>
<feature type="short sequence motif" description="NPA 1" evidence="1">
    <location>
        <begin position="63"/>
        <end position="65"/>
    </location>
</feature>
<feature type="short sequence motif" description="NPA 2" evidence="1">
    <location>
        <begin position="184"/>
        <end position="186"/>
    </location>
</feature>
<feature type="site" description="Involved in tetramerization or stability of the tetramer" evidence="1">
    <location>
        <position position="20"/>
    </location>
</feature>
<feature type="site" description="Selectivity filter" evidence="1">
    <location>
        <position position="43"/>
    </location>
</feature>
<feature type="site" description="Selectivity filter" evidence="1">
    <location>
        <position position="172"/>
    </location>
</feature>
<feature type="site" description="Selectivity filter" evidence="1">
    <location>
        <position position="181"/>
    </location>
</feature>
<feature type="site" description="Selectivity filter" evidence="1">
    <location>
        <position position="187"/>
    </location>
</feature>
<protein>
    <recommendedName>
        <fullName evidence="1">Aquaporin Z</fullName>
    </recommendedName>
</protein>
<reference key="1">
    <citation type="journal article" date="2002" name="Proc. Natl. Acad. Sci. U.S.A.">
        <title>The Brucella suis genome reveals fundamental similarities between animal and plant pathogens and symbionts.</title>
        <authorList>
            <person name="Paulsen I.T."/>
            <person name="Seshadri R."/>
            <person name="Nelson K.E."/>
            <person name="Eisen J.A."/>
            <person name="Heidelberg J.F."/>
            <person name="Read T.D."/>
            <person name="Dodson R.J."/>
            <person name="Umayam L.A."/>
            <person name="Brinkac L.M."/>
            <person name="Beanan M.J."/>
            <person name="Daugherty S.C."/>
            <person name="DeBoy R.T."/>
            <person name="Durkin A.S."/>
            <person name="Kolonay J.F."/>
            <person name="Madupu R."/>
            <person name="Nelson W.C."/>
            <person name="Ayodeji B."/>
            <person name="Kraul M."/>
            <person name="Shetty J."/>
            <person name="Malek J.A."/>
            <person name="Van Aken S.E."/>
            <person name="Riedmuller S."/>
            <person name="Tettelin H."/>
            <person name="Gill S.R."/>
            <person name="White O."/>
            <person name="Salzberg S.L."/>
            <person name="Hoover D.L."/>
            <person name="Lindler L.E."/>
            <person name="Halling S.M."/>
            <person name="Boyle S.M."/>
            <person name="Fraser C.M."/>
        </authorList>
    </citation>
    <scope>NUCLEOTIDE SEQUENCE [LARGE SCALE GENOMIC DNA]</scope>
    <source>
        <strain>1330</strain>
    </source>
</reference>
<reference key="2">
    <citation type="journal article" date="2011" name="J. Bacteriol.">
        <title>Revised genome sequence of Brucella suis 1330.</title>
        <authorList>
            <person name="Tae H."/>
            <person name="Shallom S."/>
            <person name="Settlage R."/>
            <person name="Preston D."/>
            <person name="Adams L.G."/>
            <person name="Garner H.R."/>
        </authorList>
    </citation>
    <scope>NUCLEOTIDE SEQUENCE [LARGE SCALE GENOMIC DNA]</scope>
    <source>
        <strain>1330</strain>
    </source>
</reference>
<gene>
    <name evidence="1" type="primary">aqpZ</name>
    <name type="ordered locus">BR2001</name>
    <name type="ordered locus">BS1330_I1995</name>
</gene>
<dbReference type="EMBL" id="AE014291">
    <property type="protein sequence ID" value="AAN30891.1"/>
    <property type="molecule type" value="Genomic_DNA"/>
</dbReference>
<dbReference type="EMBL" id="CP002997">
    <property type="protein sequence ID" value="AEM19308.1"/>
    <property type="molecule type" value="Genomic_DNA"/>
</dbReference>
<dbReference type="RefSeq" id="WP_006190978.1">
    <property type="nucleotide sequence ID" value="NZ_KN046804.1"/>
</dbReference>
<dbReference type="SMR" id="Q8FY85"/>
<dbReference type="GeneID" id="45052938"/>
<dbReference type="KEGG" id="bms:BR2001"/>
<dbReference type="KEGG" id="bsi:BS1330_I1995"/>
<dbReference type="PATRIC" id="fig|204722.21.peg.3229"/>
<dbReference type="HOGENOM" id="CLU_020019_3_2_5"/>
<dbReference type="PhylomeDB" id="Q8FY85"/>
<dbReference type="Proteomes" id="UP000007104">
    <property type="component" value="Chromosome I"/>
</dbReference>
<dbReference type="GO" id="GO:0005886">
    <property type="term" value="C:plasma membrane"/>
    <property type="evidence" value="ECO:0007669"/>
    <property type="project" value="UniProtKB-SubCell"/>
</dbReference>
<dbReference type="GO" id="GO:0015250">
    <property type="term" value="F:water channel activity"/>
    <property type="evidence" value="ECO:0007669"/>
    <property type="project" value="UniProtKB-UniRule"/>
</dbReference>
<dbReference type="CDD" id="cd00333">
    <property type="entry name" value="MIP"/>
    <property type="match status" value="1"/>
</dbReference>
<dbReference type="FunFam" id="1.20.1080.10:FF:000007">
    <property type="entry name" value="Aquaporin Z"/>
    <property type="match status" value="1"/>
</dbReference>
<dbReference type="Gene3D" id="1.20.1080.10">
    <property type="entry name" value="Glycerol uptake facilitator protein"/>
    <property type="match status" value="1"/>
</dbReference>
<dbReference type="HAMAP" id="MF_01146">
    <property type="entry name" value="Aquaporin_Z"/>
    <property type="match status" value="1"/>
</dbReference>
<dbReference type="InterPro" id="IPR023271">
    <property type="entry name" value="Aquaporin-like"/>
</dbReference>
<dbReference type="InterPro" id="IPR034294">
    <property type="entry name" value="Aquaporin_transptr"/>
</dbReference>
<dbReference type="InterPro" id="IPR023743">
    <property type="entry name" value="Aquaporin_Z"/>
</dbReference>
<dbReference type="InterPro" id="IPR000425">
    <property type="entry name" value="MIP"/>
</dbReference>
<dbReference type="InterPro" id="IPR022357">
    <property type="entry name" value="MIP_CS"/>
</dbReference>
<dbReference type="NCBIfam" id="TIGR00861">
    <property type="entry name" value="MIP"/>
    <property type="match status" value="1"/>
</dbReference>
<dbReference type="NCBIfam" id="NF003838">
    <property type="entry name" value="PRK05420.1"/>
    <property type="match status" value="1"/>
</dbReference>
<dbReference type="PANTHER" id="PTHR19139">
    <property type="entry name" value="AQUAPORIN TRANSPORTER"/>
    <property type="match status" value="1"/>
</dbReference>
<dbReference type="PANTHER" id="PTHR19139:SF199">
    <property type="entry name" value="MIP17260P"/>
    <property type="match status" value="1"/>
</dbReference>
<dbReference type="Pfam" id="PF00230">
    <property type="entry name" value="MIP"/>
    <property type="match status" value="1"/>
</dbReference>
<dbReference type="PRINTS" id="PR00783">
    <property type="entry name" value="MINTRINSICP"/>
</dbReference>
<dbReference type="SUPFAM" id="SSF81338">
    <property type="entry name" value="Aquaporin-like"/>
    <property type="match status" value="1"/>
</dbReference>
<dbReference type="PROSITE" id="PS00221">
    <property type="entry name" value="MIP"/>
    <property type="match status" value="1"/>
</dbReference>
<name>AQPZ_BRUSU</name>
<sequence>MLNKLSAEFFGTFWLVFGGCGSAILAAAFPELGIGFLGVALAFGLTVLTMAYAVGGISGGHFNPAVSLSLTVAGRLPAKDLIPYWVAQVLGAIATAAILYVIASGKDGFSAGGLASNGYGELSPGGYSMMAGLLIEIILTAFFIIIILGSTSSLAPAGFAPIAIGFGLTLIHLVSIPVTNTSVNPARSTGVALFADTAALSQLWLFWVAPLVGAVIGAIIWKGLLGRD</sequence>
<accession>Q8FY85</accession>
<accession>G0K8M1</accession>
<evidence type="ECO:0000255" key="1">
    <source>
        <dbReference type="HAMAP-Rule" id="MF_01146"/>
    </source>
</evidence>
<evidence type="ECO:0000305" key="2"/>